<proteinExistence type="inferred from homology"/>
<comment type="subcellular location">
    <subcellularLocation>
        <location evidence="2">Cell membrane</location>
        <topology evidence="2">Multi-pass membrane protein</topology>
    </subcellularLocation>
</comment>
<comment type="similarity">
    <text evidence="2">Belongs to the bacteriophage holin family. Cp-1 holin subfamily.</text>
</comment>
<keyword id="KW-1003">Cell membrane</keyword>
<keyword id="KW-0472">Membrane</keyword>
<keyword id="KW-0812">Transmembrane</keyword>
<keyword id="KW-1133">Transmembrane helix</keyword>
<dbReference type="EMBL" id="AL596163">
    <property type="protein sequence ID" value="CAC95408.1"/>
    <property type="molecule type" value="Genomic_DNA"/>
</dbReference>
<dbReference type="PIR" id="AH1454">
    <property type="entry name" value="AH1454"/>
</dbReference>
<dbReference type="RefSeq" id="WP_010990253.1">
    <property type="nucleotide sequence ID" value="NC_003212.1"/>
</dbReference>
<dbReference type="STRING" id="272626.gene:17564487"/>
<dbReference type="GeneID" id="93233610"/>
<dbReference type="KEGG" id="lin:lin0175"/>
<dbReference type="eggNOG" id="COG4824">
    <property type="taxonomic scope" value="Bacteria"/>
</dbReference>
<dbReference type="HOGENOM" id="CLU_125939_3_2_9"/>
<dbReference type="OrthoDB" id="88184at2"/>
<dbReference type="Proteomes" id="UP000002513">
    <property type="component" value="Chromosome"/>
</dbReference>
<dbReference type="GO" id="GO:0005886">
    <property type="term" value="C:plasma membrane"/>
    <property type="evidence" value="ECO:0007669"/>
    <property type="project" value="UniProtKB-SubCell"/>
</dbReference>
<dbReference type="InterPro" id="IPR006480">
    <property type="entry name" value="Phage_holin_4_1"/>
</dbReference>
<dbReference type="NCBIfam" id="TIGR01593">
    <property type="entry name" value="holin_tox_secr"/>
    <property type="match status" value="1"/>
</dbReference>
<dbReference type="Pfam" id="PF05105">
    <property type="entry name" value="Phage_holin_4_1"/>
    <property type="match status" value="1"/>
</dbReference>
<accession>Q92FD1</accession>
<organism>
    <name type="scientific">Listeria innocua serovar 6a (strain ATCC BAA-680 / CLIP 11262)</name>
    <dbReference type="NCBI Taxonomy" id="272626"/>
    <lineage>
        <taxon>Bacteria</taxon>
        <taxon>Bacillati</taxon>
        <taxon>Bacillota</taxon>
        <taxon>Bacilli</taxon>
        <taxon>Bacillales</taxon>
        <taxon>Listeriaceae</taxon>
        <taxon>Listeria</taxon>
    </lineage>
</organism>
<reference key="1">
    <citation type="journal article" date="2001" name="Science">
        <title>Comparative genomics of Listeria species.</title>
        <authorList>
            <person name="Glaser P."/>
            <person name="Frangeul L."/>
            <person name="Buchrieser C."/>
            <person name="Rusniok C."/>
            <person name="Amend A."/>
            <person name="Baquero F."/>
            <person name="Berche P."/>
            <person name="Bloecker H."/>
            <person name="Brandt P."/>
            <person name="Chakraborty T."/>
            <person name="Charbit A."/>
            <person name="Chetouani F."/>
            <person name="Couve E."/>
            <person name="de Daruvar A."/>
            <person name="Dehoux P."/>
            <person name="Domann E."/>
            <person name="Dominguez-Bernal G."/>
            <person name="Duchaud E."/>
            <person name="Durant L."/>
            <person name="Dussurget O."/>
            <person name="Entian K.-D."/>
            <person name="Fsihi H."/>
            <person name="Garcia-del Portillo F."/>
            <person name="Garrido P."/>
            <person name="Gautier L."/>
            <person name="Goebel W."/>
            <person name="Gomez-Lopez N."/>
            <person name="Hain T."/>
            <person name="Hauf J."/>
            <person name="Jackson D."/>
            <person name="Jones L.-M."/>
            <person name="Kaerst U."/>
            <person name="Kreft J."/>
            <person name="Kuhn M."/>
            <person name="Kunst F."/>
            <person name="Kurapkat G."/>
            <person name="Madueno E."/>
            <person name="Maitournam A."/>
            <person name="Mata Vicente J."/>
            <person name="Ng E."/>
            <person name="Nedjari H."/>
            <person name="Nordsiek G."/>
            <person name="Novella S."/>
            <person name="de Pablos B."/>
            <person name="Perez-Diaz J.-C."/>
            <person name="Purcell R."/>
            <person name="Remmel B."/>
            <person name="Rose M."/>
            <person name="Schlueter T."/>
            <person name="Simoes N."/>
            <person name="Tierrez A."/>
            <person name="Vazquez-Boland J.-A."/>
            <person name="Voss H."/>
            <person name="Wehland J."/>
            <person name="Cossart P."/>
        </authorList>
    </citation>
    <scope>NUCLEOTIDE SEQUENCE [LARGE SCALE GENOMIC DNA]</scope>
    <source>
        <strain>ATCC BAA-680 / CLIP 11262</strain>
    </source>
</reference>
<feature type="chain" id="PRO_0000172865" description="Uncharacterized protein Lin0175">
    <location>
        <begin position="1"/>
        <end position="140"/>
    </location>
</feature>
<feature type="transmembrane region" description="Helical" evidence="1">
    <location>
        <begin position="4"/>
        <end position="21"/>
    </location>
</feature>
<feature type="transmembrane region" description="Helical" evidence="1">
    <location>
        <begin position="26"/>
        <end position="48"/>
    </location>
</feature>
<name>Y175_LISIN</name>
<evidence type="ECO:0000255" key="1"/>
<evidence type="ECO:0000305" key="2"/>
<sequence>MEIILKIGILGFGAVFGYLFGEVDLLVKVLVCFIVADYISGLLASGYLGELSSKMGFKGIAKKIAILILVAIAHQIDLILGTHNTTRDAVIFFYLANELISILENFVRMGMKVPEVLKNLILIFDAKSGDEEEKHDKDMD</sequence>
<gene>
    <name type="ordered locus">lin0175</name>
</gene>
<protein>
    <recommendedName>
        <fullName>Uncharacterized protein Lin0175</fullName>
    </recommendedName>
</protein>